<feature type="chain" id="PRO_0000154733" description="Large ribosomal subunit protein uL10">
    <location>
        <begin position="1"/>
        <end position="173"/>
    </location>
</feature>
<name>RL10_SYNY3</name>
<accession>P23350</accession>
<dbReference type="EMBL" id="X53178">
    <property type="protein sequence ID" value="CAA37317.1"/>
    <property type="molecule type" value="Genomic_DNA"/>
</dbReference>
<dbReference type="EMBL" id="BA000022">
    <property type="protein sequence ID" value="BAA17417.1"/>
    <property type="molecule type" value="Genomic_DNA"/>
</dbReference>
<dbReference type="PIR" id="S13068">
    <property type="entry name" value="S13068"/>
</dbReference>
<dbReference type="SMR" id="P23350"/>
<dbReference type="FunCoup" id="P23350">
    <property type="interactions" value="482"/>
</dbReference>
<dbReference type="STRING" id="1148.gene:10498280"/>
<dbReference type="PaxDb" id="1148-1652496"/>
<dbReference type="EnsemblBacteria" id="BAA17417">
    <property type="protein sequence ID" value="BAA17417"/>
    <property type="gene ID" value="BAA17417"/>
</dbReference>
<dbReference type="KEGG" id="syn:sll1745"/>
<dbReference type="eggNOG" id="COG0244">
    <property type="taxonomic scope" value="Bacteria"/>
</dbReference>
<dbReference type="InParanoid" id="P23350"/>
<dbReference type="PhylomeDB" id="P23350"/>
<dbReference type="Proteomes" id="UP000001425">
    <property type="component" value="Chromosome"/>
</dbReference>
<dbReference type="GO" id="GO:0022625">
    <property type="term" value="C:cytosolic large ribosomal subunit"/>
    <property type="evidence" value="ECO:0000318"/>
    <property type="project" value="GO_Central"/>
</dbReference>
<dbReference type="GO" id="GO:0070180">
    <property type="term" value="F:large ribosomal subunit rRNA binding"/>
    <property type="evidence" value="ECO:0007669"/>
    <property type="project" value="UniProtKB-UniRule"/>
</dbReference>
<dbReference type="GO" id="GO:0003735">
    <property type="term" value="F:structural constituent of ribosome"/>
    <property type="evidence" value="ECO:0000318"/>
    <property type="project" value="GO_Central"/>
</dbReference>
<dbReference type="GO" id="GO:0006412">
    <property type="term" value="P:translation"/>
    <property type="evidence" value="ECO:0000318"/>
    <property type="project" value="GO_Central"/>
</dbReference>
<dbReference type="CDD" id="cd05797">
    <property type="entry name" value="Ribosomal_L10"/>
    <property type="match status" value="1"/>
</dbReference>
<dbReference type="Gene3D" id="3.30.70.1730">
    <property type="match status" value="1"/>
</dbReference>
<dbReference type="Gene3D" id="6.10.250.290">
    <property type="match status" value="1"/>
</dbReference>
<dbReference type="HAMAP" id="MF_00362">
    <property type="entry name" value="Ribosomal_uL10"/>
    <property type="match status" value="1"/>
</dbReference>
<dbReference type="InterPro" id="IPR001790">
    <property type="entry name" value="Ribosomal_uL10"/>
</dbReference>
<dbReference type="InterPro" id="IPR043141">
    <property type="entry name" value="Ribosomal_uL10-like_sf"/>
</dbReference>
<dbReference type="InterPro" id="IPR022973">
    <property type="entry name" value="Ribosomal_uL10_bac"/>
</dbReference>
<dbReference type="InterPro" id="IPR047865">
    <property type="entry name" value="Ribosomal_uL10_bac_type"/>
</dbReference>
<dbReference type="InterPro" id="IPR002363">
    <property type="entry name" value="Ribosomal_uL10_CS_bac"/>
</dbReference>
<dbReference type="NCBIfam" id="NF000955">
    <property type="entry name" value="PRK00099.1-1"/>
    <property type="match status" value="1"/>
</dbReference>
<dbReference type="PANTHER" id="PTHR11560">
    <property type="entry name" value="39S RIBOSOMAL PROTEIN L10, MITOCHONDRIAL"/>
    <property type="match status" value="1"/>
</dbReference>
<dbReference type="Pfam" id="PF00466">
    <property type="entry name" value="Ribosomal_L10"/>
    <property type="match status" value="1"/>
</dbReference>
<dbReference type="SUPFAM" id="SSF160369">
    <property type="entry name" value="Ribosomal protein L10-like"/>
    <property type="match status" value="1"/>
</dbReference>
<dbReference type="PROSITE" id="PS01109">
    <property type="entry name" value="RIBOSOMAL_L10"/>
    <property type="match status" value="1"/>
</dbReference>
<proteinExistence type="inferred from homology"/>
<gene>
    <name type="primary">rplJ</name>
    <name type="synonym">rpl10</name>
    <name type="ordered locus">sll1745</name>
</gene>
<sequence>MGRTRENKATVISDVQELFQDAQMTVIIDYQGLTVAEITDLRNRLRPLGGTCKIAKNTLVRRALAGQEAWSPMEEFLTGTTAILVLKEDLGGAIKAYKKFQKDTKKTELRGGVLEGKSLTQADVEAIGDLPSKEQLMGQIAGGINALATKIALGIKEVPASVARGLQAHVDKE</sequence>
<evidence type="ECO:0000250" key="1"/>
<evidence type="ECO:0000305" key="2"/>
<protein>
    <recommendedName>
        <fullName evidence="2">Large ribosomal subunit protein uL10</fullName>
    </recommendedName>
    <alternativeName>
        <fullName>50S ribosomal protein L10</fullName>
    </alternativeName>
</protein>
<reference key="1">
    <citation type="journal article" date="1990" name="Biochim. Biophys. Acta">
        <title>Cloning and characterization of the genes for ribosomal proteins L10 and L12 from Synechocystis Sp. PCC 6803: comparison of gene clustering pattern and protein sequence homology between cyanobacteria and chloroplasts.</title>
        <authorList>
            <person name="Sibold C."/>
            <person name="Subramanian A.R."/>
        </authorList>
    </citation>
    <scope>NUCLEOTIDE SEQUENCE [GENOMIC DNA]</scope>
</reference>
<reference key="2">
    <citation type="journal article" date="1996" name="DNA Res.">
        <title>Sequence analysis of the genome of the unicellular cyanobacterium Synechocystis sp. strain PCC6803. II. Sequence determination of the entire genome and assignment of potential protein-coding regions.</title>
        <authorList>
            <person name="Kaneko T."/>
            <person name="Sato S."/>
            <person name="Kotani H."/>
            <person name="Tanaka A."/>
            <person name="Asamizu E."/>
            <person name="Nakamura Y."/>
            <person name="Miyajima N."/>
            <person name="Hirosawa M."/>
            <person name="Sugiura M."/>
            <person name="Sasamoto S."/>
            <person name="Kimura T."/>
            <person name="Hosouchi T."/>
            <person name="Matsuno A."/>
            <person name="Muraki A."/>
            <person name="Nakazaki N."/>
            <person name="Naruo K."/>
            <person name="Okumura S."/>
            <person name="Shimpo S."/>
            <person name="Takeuchi C."/>
            <person name="Wada T."/>
            <person name="Watanabe A."/>
            <person name="Yamada M."/>
            <person name="Yasuda M."/>
            <person name="Tabata S."/>
        </authorList>
    </citation>
    <scope>NUCLEOTIDE SEQUENCE [LARGE SCALE GENOMIC DNA]</scope>
    <source>
        <strain>ATCC 27184 / PCC 6803 / Kazusa</strain>
    </source>
</reference>
<comment type="function">
    <text evidence="1">Forms part of the ribosomal stalk, playing a central role in the interaction of the ribosome with GTP-bound translation factors.</text>
</comment>
<comment type="subunit">
    <text evidence="1">Part of the ribosomal stalk of the 50S ribosomal subunit. The N-terminus interacts with L11 and the large rRNA to form the base of the stalk. The C-terminus forms an elongated spine to which L12 dimers bind in a sequential fashion forming a multimeric L10(L12)X complex (By similarity).</text>
</comment>
<comment type="similarity">
    <text evidence="2">Belongs to the universal ribosomal protein uL10 family.</text>
</comment>
<keyword id="KW-1185">Reference proteome</keyword>
<keyword id="KW-0687">Ribonucleoprotein</keyword>
<keyword id="KW-0689">Ribosomal protein</keyword>
<keyword id="KW-0694">RNA-binding</keyword>
<keyword id="KW-0699">rRNA-binding</keyword>
<organism>
    <name type="scientific">Synechocystis sp. (strain ATCC 27184 / PCC 6803 / Kazusa)</name>
    <dbReference type="NCBI Taxonomy" id="1111708"/>
    <lineage>
        <taxon>Bacteria</taxon>
        <taxon>Bacillati</taxon>
        <taxon>Cyanobacteriota</taxon>
        <taxon>Cyanophyceae</taxon>
        <taxon>Synechococcales</taxon>
        <taxon>Merismopediaceae</taxon>
        <taxon>Synechocystis</taxon>
    </lineage>
</organism>